<reference key="1">
    <citation type="journal article" date="2001" name="Science">
        <title>The genome of the natural genetic engineer Agrobacterium tumefaciens C58.</title>
        <authorList>
            <person name="Wood D.W."/>
            <person name="Setubal J.C."/>
            <person name="Kaul R."/>
            <person name="Monks D.E."/>
            <person name="Kitajima J.P."/>
            <person name="Okura V.K."/>
            <person name="Zhou Y."/>
            <person name="Chen L."/>
            <person name="Wood G.E."/>
            <person name="Almeida N.F. Jr."/>
            <person name="Woo L."/>
            <person name="Chen Y."/>
            <person name="Paulsen I.T."/>
            <person name="Eisen J.A."/>
            <person name="Karp P.D."/>
            <person name="Bovee D. Sr."/>
            <person name="Chapman P."/>
            <person name="Clendenning J."/>
            <person name="Deatherage G."/>
            <person name="Gillet W."/>
            <person name="Grant C."/>
            <person name="Kutyavin T."/>
            <person name="Levy R."/>
            <person name="Li M.-J."/>
            <person name="McClelland E."/>
            <person name="Palmieri A."/>
            <person name="Raymond C."/>
            <person name="Rouse G."/>
            <person name="Saenphimmachak C."/>
            <person name="Wu Z."/>
            <person name="Romero P."/>
            <person name="Gordon D."/>
            <person name="Zhang S."/>
            <person name="Yoo H."/>
            <person name="Tao Y."/>
            <person name="Biddle P."/>
            <person name="Jung M."/>
            <person name="Krespan W."/>
            <person name="Perry M."/>
            <person name="Gordon-Kamm B."/>
            <person name="Liao L."/>
            <person name="Kim S."/>
            <person name="Hendrick C."/>
            <person name="Zhao Z.-Y."/>
            <person name="Dolan M."/>
            <person name="Chumley F."/>
            <person name="Tingey S.V."/>
            <person name="Tomb J.-F."/>
            <person name="Gordon M.P."/>
            <person name="Olson M.V."/>
            <person name="Nester E.W."/>
        </authorList>
    </citation>
    <scope>NUCLEOTIDE SEQUENCE [LARGE SCALE GENOMIC DNA]</scope>
    <source>
        <strain>C58 / ATCC 33970</strain>
    </source>
</reference>
<reference key="2">
    <citation type="journal article" date="2001" name="Science">
        <title>Genome sequence of the plant pathogen and biotechnology agent Agrobacterium tumefaciens C58.</title>
        <authorList>
            <person name="Goodner B."/>
            <person name="Hinkle G."/>
            <person name="Gattung S."/>
            <person name="Miller N."/>
            <person name="Blanchard M."/>
            <person name="Qurollo B."/>
            <person name="Goldman B.S."/>
            <person name="Cao Y."/>
            <person name="Askenazi M."/>
            <person name="Halling C."/>
            <person name="Mullin L."/>
            <person name="Houmiel K."/>
            <person name="Gordon J."/>
            <person name="Vaudin M."/>
            <person name="Iartchouk O."/>
            <person name="Epp A."/>
            <person name="Liu F."/>
            <person name="Wollam C."/>
            <person name="Allinger M."/>
            <person name="Doughty D."/>
            <person name="Scott C."/>
            <person name="Lappas C."/>
            <person name="Markelz B."/>
            <person name="Flanagan C."/>
            <person name="Crowell C."/>
            <person name="Gurson J."/>
            <person name="Lomo C."/>
            <person name="Sear C."/>
            <person name="Strub G."/>
            <person name="Cielo C."/>
            <person name="Slater S."/>
        </authorList>
    </citation>
    <scope>NUCLEOTIDE SEQUENCE [LARGE SCALE GENOMIC DNA]</scope>
    <source>
        <strain>C58 / ATCC 33970</strain>
    </source>
</reference>
<reference key="3">
    <citation type="journal article" date="2013" name="Environ. Microbiol.">
        <title>Agrobacteria lacking ornithine lipids induce more rapid tumour formation.</title>
        <authorList>
            <person name="Vences-Guzman M.A."/>
            <person name="Guan Z."/>
            <person name="Bermudez-Barrientos J.R."/>
            <person name="Geiger O."/>
            <person name="Sohlenkamp C."/>
        </authorList>
    </citation>
    <scope>DISRUPTION PHENOTYPE</scope>
    <scope>PATHWAY</scope>
</reference>
<proteinExistence type="inferred from homology"/>
<feature type="chain" id="PRO_0000452110" description="L-ornithine N(alpha)-acyltransferase">
    <location>
        <begin position="1"/>
        <end position="293"/>
    </location>
</feature>
<sequence>MVAEIFNHDICENNVVISPRSETAQDNEGLFGRIGTLETRLARNEREIDAAQSVRYRVFVEEMKARLPAEAMRRKRDFDAWDSVCDHLLVLDKSIEGDSEDQIVGTYRLLRQETALANNGFYSASEFDIAGLVARHPGKRFMELGRSCVLPEYRTKRTVELLWQGNWAYAVKHRMDAMIGCASFPGVQPEAHALALSFLHHNCLAKGEWEAVALPELYHEMDLVPVEALNTRKALNAMPPLIKGYMRLGAMFGSGAVVDHAFNTTDVLVVLPVSSIAGRYISYYGGEAERING</sequence>
<organism>
    <name type="scientific">Agrobacterium fabrum (strain C58 / ATCC 33970)</name>
    <name type="common">Agrobacterium tumefaciens (strain C58)</name>
    <dbReference type="NCBI Taxonomy" id="176299"/>
    <lineage>
        <taxon>Bacteria</taxon>
        <taxon>Pseudomonadati</taxon>
        <taxon>Pseudomonadota</taxon>
        <taxon>Alphaproteobacteria</taxon>
        <taxon>Hyphomicrobiales</taxon>
        <taxon>Rhizobiaceae</taxon>
        <taxon>Rhizobium/Agrobacterium group</taxon>
        <taxon>Agrobacterium</taxon>
        <taxon>Agrobacterium tumefaciens complex</taxon>
    </lineage>
</organism>
<comment type="function">
    <text evidence="1">Catalyzes the first step in the biosynthesis of ornithine lipids, which are phosphorus-free membrane lipids. Catalyzes the 3-hydroxyacyl-acyl carrier protein-dependent acylation of ornithine to form lyso-ornithine lipid (LOL).</text>
</comment>
<comment type="catalytic activity">
    <reaction evidence="1">
        <text>a (3R)-hydroxyacyl-[ACP] + L-ornithine = a lyso-ornithine lipid + holo-[ACP] + H(+)</text>
        <dbReference type="Rhea" id="RHEA:20633"/>
        <dbReference type="Rhea" id="RHEA-COMP:9685"/>
        <dbReference type="Rhea" id="RHEA-COMP:9945"/>
        <dbReference type="ChEBI" id="CHEBI:15378"/>
        <dbReference type="ChEBI" id="CHEBI:46911"/>
        <dbReference type="ChEBI" id="CHEBI:64479"/>
        <dbReference type="ChEBI" id="CHEBI:78827"/>
        <dbReference type="ChEBI" id="CHEBI:138482"/>
        <dbReference type="EC" id="2.3.2.30"/>
    </reaction>
    <physiologicalReaction direction="left-to-right" evidence="1">
        <dbReference type="Rhea" id="RHEA:20634"/>
    </physiologicalReaction>
</comment>
<comment type="pathway">
    <text evidence="2">Lipid metabolism.</text>
</comment>
<comment type="disruption phenotype">
    <text evidence="2">Deletion mutant is unable to produce ornithine lipids. Mutant promotes earlier tumor formation on the plant host.</text>
</comment>
<comment type="similarity">
    <text evidence="4">Belongs to the acetyltransferase family. OlsB subfamily.</text>
</comment>
<protein>
    <recommendedName>
        <fullName evidence="4">L-ornithine N(alpha)-acyltransferase</fullName>
        <ecNumber evidence="1">2.3.2.30</ecNumber>
    </recommendedName>
</protein>
<accession>Q7D1N1</accession>
<gene>
    <name evidence="3" type="primary">olsB</name>
    <name evidence="5" type="ordered locus">Atu0344</name>
</gene>
<name>OLSB_AGRFC</name>
<dbReference type="EC" id="2.3.2.30" evidence="1"/>
<dbReference type="EMBL" id="AE007869">
    <property type="protein sequence ID" value="AAK86161.2"/>
    <property type="molecule type" value="Genomic_DNA"/>
</dbReference>
<dbReference type="RefSeq" id="NP_353376.2">
    <property type="nucleotide sequence ID" value="NC_003062.2"/>
</dbReference>
<dbReference type="RefSeq" id="WP_006310189.1">
    <property type="nucleotide sequence ID" value="NC_003062.2"/>
</dbReference>
<dbReference type="STRING" id="176299.Atu0344"/>
<dbReference type="EnsemblBacteria" id="AAK86161">
    <property type="protein sequence ID" value="AAK86161"/>
    <property type="gene ID" value="Atu0344"/>
</dbReference>
<dbReference type="GeneID" id="1132382"/>
<dbReference type="KEGG" id="atu:Atu0344"/>
<dbReference type="PATRIC" id="fig|176299.10.peg.335"/>
<dbReference type="eggNOG" id="COG3176">
    <property type="taxonomic scope" value="Bacteria"/>
</dbReference>
<dbReference type="HOGENOM" id="CLU_058962_1_0_5"/>
<dbReference type="OrthoDB" id="9787072at2"/>
<dbReference type="PhylomeDB" id="Q7D1N1"/>
<dbReference type="BioCyc" id="AGRO:ATU0344-MONOMER"/>
<dbReference type="Proteomes" id="UP000000813">
    <property type="component" value="Chromosome circular"/>
</dbReference>
<dbReference type="GO" id="GO:0043810">
    <property type="term" value="F:ornithine-acyl [acyl carrier protein] N-acyltransferase activity"/>
    <property type="evidence" value="ECO:0007669"/>
    <property type="project" value="UniProtKB-EC"/>
</dbReference>
<dbReference type="GO" id="GO:0006629">
    <property type="term" value="P:lipid metabolic process"/>
    <property type="evidence" value="ECO:0007669"/>
    <property type="project" value="UniProtKB-KW"/>
</dbReference>
<dbReference type="Gene3D" id="3.40.630.30">
    <property type="match status" value="1"/>
</dbReference>
<dbReference type="InterPro" id="IPR016181">
    <property type="entry name" value="Acyl_CoA_acyltransferase"/>
</dbReference>
<dbReference type="InterPro" id="IPR052351">
    <property type="entry name" value="Ornithine_N-alpha-AT"/>
</dbReference>
<dbReference type="PANTHER" id="PTHR37323">
    <property type="entry name" value="GCN5-RELATED N-ACETYLTRANSFERASE"/>
    <property type="match status" value="1"/>
</dbReference>
<dbReference type="PANTHER" id="PTHR37323:SF1">
    <property type="entry name" value="L-ORNITHINE N(ALPHA)-ACYLTRANSFERASE"/>
    <property type="match status" value="1"/>
</dbReference>
<dbReference type="Pfam" id="PF13444">
    <property type="entry name" value="Acetyltransf_5"/>
    <property type="match status" value="1"/>
</dbReference>
<dbReference type="SUPFAM" id="SSF55729">
    <property type="entry name" value="Acyl-CoA N-acyltransferases (Nat)"/>
    <property type="match status" value="1"/>
</dbReference>
<keyword id="KW-0012">Acyltransferase</keyword>
<keyword id="KW-0444">Lipid biosynthesis</keyword>
<keyword id="KW-0443">Lipid metabolism</keyword>
<keyword id="KW-1185">Reference proteome</keyword>
<keyword id="KW-0808">Transferase</keyword>
<evidence type="ECO:0000250" key="1">
    <source>
        <dbReference type="UniProtKB" id="Q92SJ1"/>
    </source>
</evidence>
<evidence type="ECO:0000269" key="2">
    <source>
    </source>
</evidence>
<evidence type="ECO:0000303" key="3">
    <source>
    </source>
</evidence>
<evidence type="ECO:0000305" key="4"/>
<evidence type="ECO:0000312" key="5">
    <source>
        <dbReference type="EMBL" id="AAK86161.2"/>
    </source>
</evidence>